<keyword id="KW-0963">Cytoplasm</keyword>
<keyword id="KW-0489">Methyltransferase</keyword>
<keyword id="KW-0698">rRNA processing</keyword>
<keyword id="KW-0949">S-adenosyl-L-methionine</keyword>
<keyword id="KW-0808">Transferase</keyword>
<gene>
    <name evidence="1" type="primary">rsmJ</name>
    <name type="ordered locus">lpp1801</name>
</gene>
<sequence>MNRIKAVGYENNELKEKAQLLADQLNLQLDQNADTCLFVTPEKLTLKIRNFSLMFADFSAMTWSKRRGEGKKQGLIRACKPTKGIKIFDATAGWGKDAAILATFGADVLMLERHPVMAALLADALSRRNEADIQKMCLSLIASDAISFLHSLQEKDYPDIIYIDPMHPERNKSALVKKEMQVLQQLIGTDYDAMELIKLSLSHVKSRVVVKWPQKVKPLLPPDASIDGKTVRFDIYMPQFSSN</sequence>
<reference key="1">
    <citation type="journal article" date="2004" name="Nat. Genet.">
        <title>Evidence in the Legionella pneumophila genome for exploitation of host cell functions and high genome plasticity.</title>
        <authorList>
            <person name="Cazalet C."/>
            <person name="Rusniok C."/>
            <person name="Brueggemann H."/>
            <person name="Zidane N."/>
            <person name="Magnier A."/>
            <person name="Ma L."/>
            <person name="Tichit M."/>
            <person name="Jarraud S."/>
            <person name="Bouchier C."/>
            <person name="Vandenesch F."/>
            <person name="Kunst F."/>
            <person name="Etienne J."/>
            <person name="Glaser P."/>
            <person name="Buchrieser C."/>
        </authorList>
    </citation>
    <scope>NUCLEOTIDE SEQUENCE [LARGE SCALE GENOMIC DNA]</scope>
    <source>
        <strain>Paris</strain>
    </source>
</reference>
<evidence type="ECO:0000255" key="1">
    <source>
        <dbReference type="HAMAP-Rule" id="MF_01523"/>
    </source>
</evidence>
<proteinExistence type="inferred from homology"/>
<comment type="function">
    <text evidence="1">Specifically methylates the guanosine in position 1516 of 16S rRNA.</text>
</comment>
<comment type="catalytic activity">
    <reaction evidence="1">
        <text>guanosine(1516) in 16S rRNA + S-adenosyl-L-methionine = N(2)-methylguanosine(1516) in 16S rRNA + S-adenosyl-L-homocysteine + H(+)</text>
        <dbReference type="Rhea" id="RHEA:43220"/>
        <dbReference type="Rhea" id="RHEA-COMP:10412"/>
        <dbReference type="Rhea" id="RHEA-COMP:10413"/>
        <dbReference type="ChEBI" id="CHEBI:15378"/>
        <dbReference type="ChEBI" id="CHEBI:57856"/>
        <dbReference type="ChEBI" id="CHEBI:59789"/>
        <dbReference type="ChEBI" id="CHEBI:74269"/>
        <dbReference type="ChEBI" id="CHEBI:74481"/>
        <dbReference type="EC" id="2.1.1.242"/>
    </reaction>
</comment>
<comment type="subcellular location">
    <subcellularLocation>
        <location evidence="1">Cytoplasm</location>
    </subcellularLocation>
</comment>
<comment type="similarity">
    <text evidence="1">Belongs to the methyltransferase superfamily. RsmJ family.</text>
</comment>
<name>RSMJ_LEGPA</name>
<organism>
    <name type="scientific">Legionella pneumophila (strain Paris)</name>
    <dbReference type="NCBI Taxonomy" id="297246"/>
    <lineage>
        <taxon>Bacteria</taxon>
        <taxon>Pseudomonadati</taxon>
        <taxon>Pseudomonadota</taxon>
        <taxon>Gammaproteobacteria</taxon>
        <taxon>Legionellales</taxon>
        <taxon>Legionellaceae</taxon>
        <taxon>Legionella</taxon>
    </lineage>
</organism>
<feature type="chain" id="PRO_0000212072" description="Ribosomal RNA small subunit methyltransferase J">
    <location>
        <begin position="1"/>
        <end position="243"/>
    </location>
</feature>
<feature type="binding site" evidence="1">
    <location>
        <begin position="112"/>
        <end position="113"/>
    </location>
    <ligand>
        <name>S-adenosyl-L-methionine</name>
        <dbReference type="ChEBI" id="CHEBI:59789"/>
    </ligand>
</feature>
<feature type="binding site" evidence="1">
    <location>
        <position position="164"/>
    </location>
    <ligand>
        <name>S-adenosyl-L-methionine</name>
        <dbReference type="ChEBI" id="CHEBI:59789"/>
    </ligand>
</feature>
<protein>
    <recommendedName>
        <fullName evidence="1">Ribosomal RNA small subunit methyltransferase J</fullName>
        <ecNumber evidence="1">2.1.1.242</ecNumber>
    </recommendedName>
    <alternativeName>
        <fullName evidence="1">16S rRNA m2G1516 methyltransferase</fullName>
    </alternativeName>
    <alternativeName>
        <fullName evidence="1">rRNA (guanine-N(2)-)-methyltransferase</fullName>
    </alternativeName>
</protein>
<dbReference type="EC" id="2.1.1.242" evidence="1"/>
<dbReference type="EMBL" id="CR628336">
    <property type="protein sequence ID" value="CAH12953.1"/>
    <property type="molecule type" value="Genomic_DNA"/>
</dbReference>
<dbReference type="RefSeq" id="WP_011214092.1">
    <property type="nucleotide sequence ID" value="NC_006368.1"/>
</dbReference>
<dbReference type="SMR" id="Q5X479"/>
<dbReference type="KEGG" id="lpp:lpp1801"/>
<dbReference type="LegioList" id="lpp1801"/>
<dbReference type="HOGENOM" id="CLU_076324_1_0_6"/>
<dbReference type="GO" id="GO:0005737">
    <property type="term" value="C:cytoplasm"/>
    <property type="evidence" value="ECO:0007669"/>
    <property type="project" value="UniProtKB-SubCell"/>
</dbReference>
<dbReference type="GO" id="GO:0008990">
    <property type="term" value="F:rRNA (guanine-N2-)-methyltransferase activity"/>
    <property type="evidence" value="ECO:0007669"/>
    <property type="project" value="UniProtKB-UniRule"/>
</dbReference>
<dbReference type="Gene3D" id="3.40.50.150">
    <property type="entry name" value="Vaccinia Virus protein VP39"/>
    <property type="match status" value="1"/>
</dbReference>
<dbReference type="HAMAP" id="MF_01523">
    <property type="entry name" value="16SrRNA_methyltr_J"/>
    <property type="match status" value="1"/>
</dbReference>
<dbReference type="InterPro" id="IPR007536">
    <property type="entry name" value="16SrRNA_methylTrfase_J"/>
</dbReference>
<dbReference type="InterPro" id="IPR029063">
    <property type="entry name" value="SAM-dependent_MTases_sf"/>
</dbReference>
<dbReference type="PANTHER" id="PTHR36112">
    <property type="entry name" value="RIBOSOMAL RNA SMALL SUBUNIT METHYLTRANSFERASE J"/>
    <property type="match status" value="1"/>
</dbReference>
<dbReference type="PANTHER" id="PTHR36112:SF1">
    <property type="entry name" value="RIBOSOMAL RNA SMALL SUBUNIT METHYLTRANSFERASE J"/>
    <property type="match status" value="1"/>
</dbReference>
<dbReference type="Pfam" id="PF04445">
    <property type="entry name" value="SAM_MT"/>
    <property type="match status" value="1"/>
</dbReference>
<dbReference type="SUPFAM" id="SSF53335">
    <property type="entry name" value="S-adenosyl-L-methionine-dependent methyltransferases"/>
    <property type="match status" value="1"/>
</dbReference>
<accession>Q5X479</accession>